<protein>
    <recommendedName>
        <fullName evidence="1">Thiazole synthase</fullName>
        <ecNumber evidence="1">2.8.1.10</ecNumber>
    </recommendedName>
</protein>
<accession>A6Q1C9</accession>
<evidence type="ECO:0000255" key="1">
    <source>
        <dbReference type="HAMAP-Rule" id="MF_00443"/>
    </source>
</evidence>
<proteinExistence type="inferred from homology"/>
<keyword id="KW-0963">Cytoplasm</keyword>
<keyword id="KW-1185">Reference proteome</keyword>
<keyword id="KW-0704">Schiff base</keyword>
<keyword id="KW-0784">Thiamine biosynthesis</keyword>
<keyword id="KW-0808">Transferase</keyword>
<dbReference type="EC" id="2.8.1.10" evidence="1"/>
<dbReference type="EMBL" id="AP009178">
    <property type="protein sequence ID" value="BAF69288.1"/>
    <property type="molecule type" value="Genomic_DNA"/>
</dbReference>
<dbReference type="RefSeq" id="WP_012081551.1">
    <property type="nucleotide sequence ID" value="NC_009662.1"/>
</dbReference>
<dbReference type="SMR" id="A6Q1C9"/>
<dbReference type="FunCoup" id="A6Q1C9">
    <property type="interactions" value="296"/>
</dbReference>
<dbReference type="STRING" id="387092.NIS_0174"/>
<dbReference type="KEGG" id="nis:NIS_0174"/>
<dbReference type="eggNOG" id="COG2022">
    <property type="taxonomic scope" value="Bacteria"/>
</dbReference>
<dbReference type="HOGENOM" id="CLU_062233_1_0_7"/>
<dbReference type="InParanoid" id="A6Q1C9"/>
<dbReference type="OrthoDB" id="9805935at2"/>
<dbReference type="UniPathway" id="UPA00060"/>
<dbReference type="Proteomes" id="UP000001118">
    <property type="component" value="Chromosome"/>
</dbReference>
<dbReference type="GO" id="GO:0005737">
    <property type="term" value="C:cytoplasm"/>
    <property type="evidence" value="ECO:0007669"/>
    <property type="project" value="UniProtKB-SubCell"/>
</dbReference>
<dbReference type="GO" id="GO:1990107">
    <property type="term" value="F:thiazole synthase activity"/>
    <property type="evidence" value="ECO:0007669"/>
    <property type="project" value="UniProtKB-EC"/>
</dbReference>
<dbReference type="GO" id="GO:0009229">
    <property type="term" value="P:thiamine diphosphate biosynthetic process"/>
    <property type="evidence" value="ECO:0007669"/>
    <property type="project" value="UniProtKB-UniRule"/>
</dbReference>
<dbReference type="CDD" id="cd04728">
    <property type="entry name" value="ThiG"/>
    <property type="match status" value="1"/>
</dbReference>
<dbReference type="Gene3D" id="3.20.20.70">
    <property type="entry name" value="Aldolase class I"/>
    <property type="match status" value="1"/>
</dbReference>
<dbReference type="HAMAP" id="MF_00443">
    <property type="entry name" value="ThiG"/>
    <property type="match status" value="1"/>
</dbReference>
<dbReference type="InterPro" id="IPR013785">
    <property type="entry name" value="Aldolase_TIM"/>
</dbReference>
<dbReference type="InterPro" id="IPR033983">
    <property type="entry name" value="Thiazole_synthase_ThiG"/>
</dbReference>
<dbReference type="InterPro" id="IPR008867">
    <property type="entry name" value="ThiG"/>
</dbReference>
<dbReference type="PANTHER" id="PTHR34266">
    <property type="entry name" value="THIAZOLE SYNTHASE"/>
    <property type="match status" value="1"/>
</dbReference>
<dbReference type="PANTHER" id="PTHR34266:SF2">
    <property type="entry name" value="THIAZOLE SYNTHASE"/>
    <property type="match status" value="1"/>
</dbReference>
<dbReference type="Pfam" id="PF05690">
    <property type="entry name" value="ThiG"/>
    <property type="match status" value="1"/>
</dbReference>
<dbReference type="SUPFAM" id="SSF110399">
    <property type="entry name" value="ThiG-like"/>
    <property type="match status" value="1"/>
</dbReference>
<sequence length="259" mass="27603">MADILKIGKYEFTSRLIVGSGKYPDFKTTYDATIASGAQMITVAVRRVNITDPNKENLMDYFKDSDVQLLPNSAGCTTAEEAITLFRMVREATGIDIIKLEIIGDTEKTLYPDVIETIKACEVLANDGFTVMAYTNDDPITAKKLENAGAAAVMPLAAPIGSGLGIQNRYNVVFVKEAVNVPVIVDAGVGCASDAAIAMELGADGVLTNTAIAQAKNPIQMAEAMKYAVIAGRMSYLAGRIPKKPYATASSPSEGMIQF</sequence>
<organism>
    <name type="scientific">Nitratiruptor sp. (strain SB155-2)</name>
    <dbReference type="NCBI Taxonomy" id="387092"/>
    <lineage>
        <taxon>Bacteria</taxon>
        <taxon>Pseudomonadati</taxon>
        <taxon>Campylobacterota</taxon>
        <taxon>Epsilonproteobacteria</taxon>
        <taxon>Nautiliales</taxon>
        <taxon>Nitratiruptoraceae</taxon>
        <taxon>Nitratiruptor</taxon>
    </lineage>
</organism>
<reference key="1">
    <citation type="journal article" date="2007" name="Proc. Natl. Acad. Sci. U.S.A.">
        <title>Deep-sea vent epsilon-proteobacterial genomes provide insights into emergence of pathogens.</title>
        <authorList>
            <person name="Nakagawa S."/>
            <person name="Takaki Y."/>
            <person name="Shimamura S."/>
            <person name="Reysenbach A.-L."/>
            <person name="Takai K."/>
            <person name="Horikoshi K."/>
        </authorList>
    </citation>
    <scope>NUCLEOTIDE SEQUENCE [LARGE SCALE GENOMIC DNA]</scope>
    <source>
        <strain>SB155-2</strain>
    </source>
</reference>
<comment type="function">
    <text evidence="1">Catalyzes the rearrangement of 1-deoxy-D-xylulose 5-phosphate (DXP) to produce the thiazole phosphate moiety of thiamine. Sulfur is provided by the thiocarboxylate moiety of the carrier protein ThiS. In vitro, sulfur can be provided by H(2)S.</text>
</comment>
<comment type="catalytic activity">
    <reaction evidence="1">
        <text>[ThiS sulfur-carrier protein]-C-terminal-Gly-aminoethanethioate + 2-iminoacetate + 1-deoxy-D-xylulose 5-phosphate = [ThiS sulfur-carrier protein]-C-terminal Gly-Gly + 2-[(2R,5Z)-2-carboxy-4-methylthiazol-5(2H)-ylidene]ethyl phosphate + 2 H2O + H(+)</text>
        <dbReference type="Rhea" id="RHEA:26297"/>
        <dbReference type="Rhea" id="RHEA-COMP:12909"/>
        <dbReference type="Rhea" id="RHEA-COMP:19908"/>
        <dbReference type="ChEBI" id="CHEBI:15377"/>
        <dbReference type="ChEBI" id="CHEBI:15378"/>
        <dbReference type="ChEBI" id="CHEBI:57792"/>
        <dbReference type="ChEBI" id="CHEBI:62899"/>
        <dbReference type="ChEBI" id="CHEBI:77846"/>
        <dbReference type="ChEBI" id="CHEBI:90778"/>
        <dbReference type="ChEBI" id="CHEBI:232372"/>
        <dbReference type="EC" id="2.8.1.10"/>
    </reaction>
</comment>
<comment type="pathway">
    <text evidence="1">Cofactor biosynthesis; thiamine diphosphate biosynthesis.</text>
</comment>
<comment type="subunit">
    <text evidence="1">Homotetramer. Forms heterodimers with either ThiH or ThiS.</text>
</comment>
<comment type="subcellular location">
    <subcellularLocation>
        <location evidence="1">Cytoplasm</location>
    </subcellularLocation>
</comment>
<comment type="similarity">
    <text evidence="1">Belongs to the ThiG family.</text>
</comment>
<feature type="chain" id="PRO_1000026020" description="Thiazole synthase">
    <location>
        <begin position="1"/>
        <end position="259"/>
    </location>
</feature>
<feature type="active site" description="Schiff-base intermediate with DXP" evidence="1">
    <location>
        <position position="99"/>
    </location>
</feature>
<feature type="binding site" evidence="1">
    <location>
        <position position="161"/>
    </location>
    <ligand>
        <name>1-deoxy-D-xylulose 5-phosphate</name>
        <dbReference type="ChEBI" id="CHEBI:57792"/>
    </ligand>
</feature>
<feature type="binding site" evidence="1">
    <location>
        <begin position="187"/>
        <end position="188"/>
    </location>
    <ligand>
        <name>1-deoxy-D-xylulose 5-phosphate</name>
        <dbReference type="ChEBI" id="CHEBI:57792"/>
    </ligand>
</feature>
<feature type="binding site" evidence="1">
    <location>
        <begin position="209"/>
        <end position="210"/>
    </location>
    <ligand>
        <name>1-deoxy-D-xylulose 5-phosphate</name>
        <dbReference type="ChEBI" id="CHEBI:57792"/>
    </ligand>
</feature>
<name>THIG_NITSB</name>
<gene>
    <name evidence="1" type="primary">thiG</name>
    <name type="ordered locus">NIS_0174</name>
</gene>